<proteinExistence type="inferred from homology"/>
<comment type="function">
    <text evidence="1">Possesses two activities: a DNA synthesis (polymerase) and an exonucleolytic activity that degrades single-stranded DNA in the 3'- to 5'-direction. Has a template-primer preference which is characteristic of a replicative DNA polymerase (By similarity).</text>
</comment>
<comment type="catalytic activity">
    <reaction evidence="2">
        <text>DNA(n) + a 2'-deoxyribonucleoside 5'-triphosphate = DNA(n+1) + diphosphate</text>
        <dbReference type="Rhea" id="RHEA:22508"/>
        <dbReference type="Rhea" id="RHEA-COMP:17339"/>
        <dbReference type="Rhea" id="RHEA-COMP:17340"/>
        <dbReference type="ChEBI" id="CHEBI:33019"/>
        <dbReference type="ChEBI" id="CHEBI:61560"/>
        <dbReference type="ChEBI" id="CHEBI:173112"/>
        <dbReference type="EC" id="2.7.7.7"/>
    </reaction>
</comment>
<comment type="catalytic activity">
    <reaction evidence="2">
        <text>Exonucleolytic cleavage in the 3'- to 5'-direction to yield nucleoside 5'-phosphates.</text>
        <dbReference type="EC" id="3.1.11.1"/>
    </reaction>
</comment>
<comment type="subunit">
    <text evidence="2">Heterodimer of a large subunit and a small subunit.</text>
</comment>
<comment type="similarity">
    <text evidence="2">Belongs to the archaeal DNA polymerase II family.</text>
</comment>
<accession>A4G0G9</accession>
<organism>
    <name type="scientific">Methanococcus maripaludis (strain C5 / ATCC BAA-1333)</name>
    <dbReference type="NCBI Taxonomy" id="402880"/>
    <lineage>
        <taxon>Archaea</taxon>
        <taxon>Methanobacteriati</taxon>
        <taxon>Methanobacteriota</taxon>
        <taxon>Methanomada group</taxon>
        <taxon>Methanococci</taxon>
        <taxon>Methanococcales</taxon>
        <taxon>Methanococcaceae</taxon>
        <taxon>Methanococcus</taxon>
    </lineage>
</organism>
<protein>
    <recommendedName>
        <fullName evidence="2">DNA polymerase II large subunit</fullName>
        <shortName evidence="2">Pol II</shortName>
        <ecNumber evidence="2">2.7.7.7</ecNumber>
    </recommendedName>
    <alternativeName>
        <fullName evidence="2">Exodeoxyribonuclease large subunit</fullName>
        <ecNumber evidence="2">3.1.11.1</ecNumber>
    </alternativeName>
</protein>
<name>DP2L_METM5</name>
<feature type="chain" id="PRO_1000019389" description="DNA polymerase II large subunit">
    <location>
        <begin position="1"/>
        <end position="1131"/>
    </location>
</feature>
<reference key="1">
    <citation type="submission" date="2007-03" db="EMBL/GenBank/DDBJ databases">
        <title>Complete sequence of chromosome of Methanococcus maripaludis C5.</title>
        <authorList>
            <consortium name="US DOE Joint Genome Institute"/>
            <person name="Copeland A."/>
            <person name="Lucas S."/>
            <person name="Lapidus A."/>
            <person name="Barry K."/>
            <person name="Glavina del Rio T."/>
            <person name="Dalin E."/>
            <person name="Tice H."/>
            <person name="Pitluck S."/>
            <person name="Chertkov O."/>
            <person name="Brettin T."/>
            <person name="Bruce D."/>
            <person name="Han C."/>
            <person name="Detter J.C."/>
            <person name="Schmutz J."/>
            <person name="Larimer F."/>
            <person name="Land M."/>
            <person name="Hauser L."/>
            <person name="Kyrpides N."/>
            <person name="Mikhailova N."/>
            <person name="Sieprawska-Lupa M."/>
            <person name="Whitman W.B."/>
            <person name="Richardson P."/>
        </authorList>
    </citation>
    <scope>NUCLEOTIDE SEQUENCE [LARGE SCALE GENOMIC DNA]</scope>
    <source>
        <strain>C5 / ATCC BAA-1333</strain>
    </source>
</reference>
<sequence length="1131" mass="128289">MLHVSASKGMTEYFKNILDNVKNLYDLAEGCRKSGYDVTDHVEIPLAKDMADRVEGIVGPKNVAERIRELVSDLGKEPAALEIAKEIVEGKFGEFGREVGAEQAVRTALAVITEGIVAAPLEGIAHVKIKKNNDGGEYLAIYFAGPIRSAGGTAQALAVLVGDYVRKNMGLDKFKPTDDEVERYGEEVDLYQSEVTTFQYQPKAEEIRVAVRNISVEITGEATDDVEVSGHRDLPRIETNQIRGGALLALVEGVLLKAPKILRHVDKLGIEGWDWLKELKSKKEELVEEIEEENDEFNYEEEEDLSQYEDYEVEAVTKFIGEVIAGRPVFSHPSKKGGFRLRYGRSRNTGFATDGFHPAIMYLVDDFMAVGTQLKTERPGKATCVVPVDSIEGPIVKLNDKSVLKIDTVEKAKQYRDDVEEILFLGDILVNYGDFLENNHTILPSSWCTEWYEKILKSENLEYTKEFIENPDQKEVVKYAKLTNTPLHPKYTYFWHDISKDNINVLRNWIIGGRYNESNDSWGLTYDPEDPEISIVKRYLELIGCPHTVVDEKVEIFEYYPLLYSLGYDFDEKQDVVEDIEEKLQNTKNNMHFINTIAPFEIRRNAYIYVGARMGRPEKAASRKMKPPVNGLFPIGNAGALVRLINKAVDEGKTDEIEISNVKCSCGNVSLYRTCPFCGSSVEPSGPSRIKLPIKEYWYKALENLKINKAGDVKCIKGMTSKDKIIEPLEKAILRAKNDIFVFKDGTTRFDCTDVPVTHFRPVEIHGDIEKLKSLGYLKDIHGNPLENENQVLELNVQDVIVPESCMDYFLNVSKFIDDLLEKYYKKDRFYNVNKREELVGHLIIGMAPHTSAGMVGRIIGYSKANVGYAHPYFHASKRRNCDGDEDAFFLLLDAFMNFSKRFLPDKRGGQMDAPLVLTTILDPKEVDGEVHNMDSMWEYPLEFYEKSLEGIAPKEIKKIMETVEDRLDKESQYEGIGYTHETLKIDEGPLVCAYKTLGSMMEKTSAQLAVAKKIRATDERDVAEKVIQSHFVPDLIGNLRAFSRQGVRCKCGAKYRRMPLKGICRKCGSRLILTVSKGAVEKYMDVSQTMAEKYNASDYIKQRLEIIRSGIDSLFVNDKRKQVKIEDFFK</sequence>
<dbReference type="EC" id="2.7.7.7" evidence="2"/>
<dbReference type="EC" id="3.1.11.1" evidence="2"/>
<dbReference type="EMBL" id="CP000609">
    <property type="protein sequence ID" value="ABO35953.1"/>
    <property type="molecule type" value="Genomic_DNA"/>
</dbReference>
<dbReference type="RefSeq" id="WP_011869400.1">
    <property type="nucleotide sequence ID" value="NC_009135.1"/>
</dbReference>
<dbReference type="SMR" id="A4G0G9"/>
<dbReference type="STRING" id="402880.MmarC5_1656"/>
<dbReference type="GeneID" id="4928217"/>
<dbReference type="KEGG" id="mmq:MmarC5_1656"/>
<dbReference type="eggNOG" id="arCOG04447">
    <property type="taxonomic scope" value="Archaea"/>
</dbReference>
<dbReference type="HOGENOM" id="CLU_001154_0_0_2"/>
<dbReference type="OrthoDB" id="7529at2157"/>
<dbReference type="Proteomes" id="UP000000253">
    <property type="component" value="Chromosome"/>
</dbReference>
<dbReference type="GO" id="GO:0003677">
    <property type="term" value="F:DNA binding"/>
    <property type="evidence" value="ECO:0007669"/>
    <property type="project" value="UniProtKB-UniRule"/>
</dbReference>
<dbReference type="GO" id="GO:0003887">
    <property type="term" value="F:DNA-directed DNA polymerase activity"/>
    <property type="evidence" value="ECO:0007669"/>
    <property type="project" value="UniProtKB-UniRule"/>
</dbReference>
<dbReference type="GO" id="GO:0008310">
    <property type="term" value="F:single-stranded DNA 3'-5' DNA exonuclease activity"/>
    <property type="evidence" value="ECO:0007669"/>
    <property type="project" value="UniProtKB-EC"/>
</dbReference>
<dbReference type="GO" id="GO:0006308">
    <property type="term" value="P:DNA catabolic process"/>
    <property type="evidence" value="ECO:0007669"/>
    <property type="project" value="UniProtKB-UniRule"/>
</dbReference>
<dbReference type="GO" id="GO:0006261">
    <property type="term" value="P:DNA-templated DNA replication"/>
    <property type="evidence" value="ECO:0007669"/>
    <property type="project" value="UniProtKB-UniRule"/>
</dbReference>
<dbReference type="HAMAP" id="MF_00324">
    <property type="entry name" value="DNApol_II_L_arch"/>
    <property type="match status" value="1"/>
</dbReference>
<dbReference type="InterPro" id="IPR004475">
    <property type="entry name" value="PolC_DP2"/>
</dbReference>
<dbReference type="InterPro" id="IPR056172">
    <property type="entry name" value="PolC_DP2_cat_dom"/>
</dbReference>
<dbReference type="InterPro" id="IPR056171">
    <property type="entry name" value="PolC_DP2_central_dom"/>
</dbReference>
<dbReference type="InterPro" id="IPR016033">
    <property type="entry name" value="PolC_DP2_N"/>
</dbReference>
<dbReference type="NCBIfam" id="TIGR00354">
    <property type="entry name" value="polC"/>
    <property type="match status" value="1"/>
</dbReference>
<dbReference type="NCBIfam" id="NF003103">
    <property type="entry name" value="PRK04023.1"/>
    <property type="match status" value="1"/>
</dbReference>
<dbReference type="PANTHER" id="PTHR42210">
    <property type="entry name" value="DNA POLYMERASE II LARGE SUBUNIT"/>
    <property type="match status" value="1"/>
</dbReference>
<dbReference type="PANTHER" id="PTHR42210:SF1">
    <property type="entry name" value="DNA POLYMERASE II LARGE SUBUNIT"/>
    <property type="match status" value="1"/>
</dbReference>
<dbReference type="Pfam" id="PF24846">
    <property type="entry name" value="PolC_DP2_cat"/>
    <property type="match status" value="1"/>
</dbReference>
<dbReference type="Pfam" id="PF24844">
    <property type="entry name" value="PolC_DP2_central"/>
    <property type="match status" value="1"/>
</dbReference>
<dbReference type="Pfam" id="PF03833">
    <property type="entry name" value="PolC_DP2_N"/>
    <property type="match status" value="1"/>
</dbReference>
<dbReference type="PIRSF" id="PIRSF016275">
    <property type="entry name" value="PolC_DP2"/>
    <property type="match status" value="1"/>
</dbReference>
<gene>
    <name evidence="2" type="primary">polC</name>
    <name type="ordered locus">MmarC5_1656</name>
</gene>
<keyword id="KW-0235">DNA replication</keyword>
<keyword id="KW-0238">DNA-binding</keyword>
<keyword id="KW-0239">DNA-directed DNA polymerase</keyword>
<keyword id="KW-0269">Exonuclease</keyword>
<keyword id="KW-0378">Hydrolase</keyword>
<keyword id="KW-0511">Multifunctional enzyme</keyword>
<keyword id="KW-0540">Nuclease</keyword>
<keyword id="KW-0548">Nucleotidyltransferase</keyword>
<keyword id="KW-0808">Transferase</keyword>
<evidence type="ECO:0000250" key="1"/>
<evidence type="ECO:0000255" key="2">
    <source>
        <dbReference type="HAMAP-Rule" id="MF_00324"/>
    </source>
</evidence>